<comment type="function">
    <text evidence="1">Catalyzes a reversible aldol reaction between acetaldehyde and D-glyceraldehyde 3-phosphate to generate 2-deoxy-D-ribose 5-phosphate.</text>
</comment>
<comment type="catalytic activity">
    <reaction evidence="1">
        <text>2-deoxy-D-ribose 5-phosphate = D-glyceraldehyde 3-phosphate + acetaldehyde</text>
        <dbReference type="Rhea" id="RHEA:12821"/>
        <dbReference type="ChEBI" id="CHEBI:15343"/>
        <dbReference type="ChEBI" id="CHEBI:59776"/>
        <dbReference type="ChEBI" id="CHEBI:62877"/>
        <dbReference type="EC" id="4.1.2.4"/>
    </reaction>
</comment>
<comment type="pathway">
    <text evidence="1">Carbohydrate degradation; 2-deoxy-D-ribose 1-phosphate degradation; D-glyceraldehyde 3-phosphate and acetaldehyde from 2-deoxy-alpha-D-ribose 1-phosphate: step 2/2.</text>
</comment>
<comment type="subcellular location">
    <subcellularLocation>
        <location evidence="1">Cytoplasm</location>
    </subcellularLocation>
</comment>
<comment type="similarity">
    <text evidence="1 2">Belongs to the DeoC/FbaB aldolase family. DeoC type 1 subfamily.</text>
</comment>
<proteinExistence type="inferred from homology"/>
<dbReference type="EC" id="4.1.2.4" evidence="1"/>
<dbReference type="EMBL" id="X13544">
    <property type="protein sequence ID" value="CAA31897.1"/>
    <property type="molecule type" value="Genomic_DNA"/>
</dbReference>
<dbReference type="EMBL" id="U00089">
    <property type="protein sequence ID" value="AAB95739.1"/>
    <property type="molecule type" value="Genomic_DNA"/>
</dbReference>
<dbReference type="PIR" id="S02216">
    <property type="entry name" value="S02216"/>
</dbReference>
<dbReference type="RefSeq" id="NP_109751.1">
    <property type="nucleotide sequence ID" value="NC_000912.1"/>
</dbReference>
<dbReference type="RefSeq" id="WP_010874420.1">
    <property type="nucleotide sequence ID" value="NZ_OU342337.1"/>
</dbReference>
<dbReference type="SMR" id="P09924"/>
<dbReference type="IntAct" id="P09924">
    <property type="interactions" value="2"/>
</dbReference>
<dbReference type="STRING" id="272634.MPN_063"/>
<dbReference type="EnsemblBacteria" id="AAB95739">
    <property type="protein sequence ID" value="AAB95739"/>
    <property type="gene ID" value="MPN_063"/>
</dbReference>
<dbReference type="GeneID" id="66609295"/>
<dbReference type="KEGG" id="mpn:MPN_063"/>
<dbReference type="PATRIC" id="fig|272634.6.peg.64"/>
<dbReference type="HOGENOM" id="CLU_053595_0_2_14"/>
<dbReference type="OrthoDB" id="9778711at2"/>
<dbReference type="BioCyc" id="MPNE272634:G1GJ3-99-MONOMER"/>
<dbReference type="UniPathway" id="UPA00002">
    <property type="reaction ID" value="UER00468"/>
</dbReference>
<dbReference type="Proteomes" id="UP000000808">
    <property type="component" value="Chromosome"/>
</dbReference>
<dbReference type="GO" id="GO:0005737">
    <property type="term" value="C:cytoplasm"/>
    <property type="evidence" value="ECO:0007669"/>
    <property type="project" value="UniProtKB-SubCell"/>
</dbReference>
<dbReference type="GO" id="GO:0004139">
    <property type="term" value="F:deoxyribose-phosphate aldolase activity"/>
    <property type="evidence" value="ECO:0007669"/>
    <property type="project" value="UniProtKB-UniRule"/>
</dbReference>
<dbReference type="GO" id="GO:0006018">
    <property type="term" value="P:2-deoxyribose 1-phosphate catabolic process"/>
    <property type="evidence" value="ECO:0007669"/>
    <property type="project" value="UniProtKB-UniRule"/>
</dbReference>
<dbReference type="GO" id="GO:0016052">
    <property type="term" value="P:carbohydrate catabolic process"/>
    <property type="evidence" value="ECO:0007669"/>
    <property type="project" value="TreeGrafter"/>
</dbReference>
<dbReference type="GO" id="GO:0009264">
    <property type="term" value="P:deoxyribonucleotide catabolic process"/>
    <property type="evidence" value="ECO:0007669"/>
    <property type="project" value="InterPro"/>
</dbReference>
<dbReference type="CDD" id="cd00959">
    <property type="entry name" value="DeoC"/>
    <property type="match status" value="1"/>
</dbReference>
<dbReference type="FunFam" id="3.20.20.70:FF:000044">
    <property type="entry name" value="Deoxyribose-phosphate aldolase"/>
    <property type="match status" value="1"/>
</dbReference>
<dbReference type="Gene3D" id="3.20.20.70">
    <property type="entry name" value="Aldolase class I"/>
    <property type="match status" value="1"/>
</dbReference>
<dbReference type="HAMAP" id="MF_00114">
    <property type="entry name" value="DeoC_type1"/>
    <property type="match status" value="1"/>
</dbReference>
<dbReference type="InterPro" id="IPR013785">
    <property type="entry name" value="Aldolase_TIM"/>
</dbReference>
<dbReference type="InterPro" id="IPR011343">
    <property type="entry name" value="DeoC"/>
</dbReference>
<dbReference type="InterPro" id="IPR002915">
    <property type="entry name" value="DeoC/FbaB/LacD_aldolase"/>
</dbReference>
<dbReference type="InterPro" id="IPR028581">
    <property type="entry name" value="DeoC_typeI"/>
</dbReference>
<dbReference type="NCBIfam" id="TIGR00126">
    <property type="entry name" value="deoC"/>
    <property type="match status" value="1"/>
</dbReference>
<dbReference type="PANTHER" id="PTHR10889">
    <property type="entry name" value="DEOXYRIBOSE-PHOSPHATE ALDOLASE"/>
    <property type="match status" value="1"/>
</dbReference>
<dbReference type="PANTHER" id="PTHR10889:SF1">
    <property type="entry name" value="DEOXYRIBOSE-PHOSPHATE ALDOLASE"/>
    <property type="match status" value="1"/>
</dbReference>
<dbReference type="Pfam" id="PF01791">
    <property type="entry name" value="DeoC"/>
    <property type="match status" value="1"/>
</dbReference>
<dbReference type="PIRSF" id="PIRSF001357">
    <property type="entry name" value="DeoC"/>
    <property type="match status" value="1"/>
</dbReference>
<dbReference type="SMART" id="SM01133">
    <property type="entry name" value="DeoC"/>
    <property type="match status" value="1"/>
</dbReference>
<dbReference type="SUPFAM" id="SSF51569">
    <property type="entry name" value="Aldolase"/>
    <property type="match status" value="1"/>
</dbReference>
<organism>
    <name type="scientific">Mycoplasma pneumoniae (strain ATCC 29342 / M129 / Subtype 1)</name>
    <name type="common">Mycoplasmoides pneumoniae</name>
    <dbReference type="NCBI Taxonomy" id="272634"/>
    <lineage>
        <taxon>Bacteria</taxon>
        <taxon>Bacillati</taxon>
        <taxon>Mycoplasmatota</taxon>
        <taxon>Mycoplasmoidales</taxon>
        <taxon>Mycoplasmoidaceae</taxon>
        <taxon>Mycoplasmoides</taxon>
    </lineage>
</organism>
<protein>
    <recommendedName>
        <fullName evidence="1">Deoxyribose-phosphate aldolase</fullName>
        <shortName evidence="1">DERA</shortName>
        <ecNumber evidence="1">4.1.2.4</ecNumber>
    </recommendedName>
    <alternativeName>
        <fullName evidence="1">2-deoxy-D-ribose 5-phosphate aldolase</fullName>
    </alternativeName>
    <alternativeName>
        <fullName evidence="1">Phosphodeoxyriboaldolase</fullName>
        <shortName evidence="1">Deoxyriboaldolase</shortName>
    </alternativeName>
</protein>
<sequence length="224" mass="24878">MKLEYNRIIDSTLLKADTLPHEIDALCADAHKYQFYAVCVNPSYVRYAKNILKGTGVKLCTVVGFPLGQTTQRQKVYETKIAIKEGADEIDMVMNIAEFKKRCACVISEIRAVKKVCGKRTLKVIIETALLNQDEIRDAVNVCIDGNADFVKTSTGFSMRGASLEDITIMREASGNLIKIKASGGVQTAQQFLDFFNAGVSRIGTSNAVKIMEELHKLESHEHR</sequence>
<name>DEOC_MYCPN</name>
<gene>
    <name evidence="1" type="primary">deoC</name>
    <name type="ordered locus">MPN_063</name>
    <name type="ORF">MP091</name>
</gene>
<accession>P09924</accession>
<keyword id="KW-0963">Cytoplasm</keyword>
<keyword id="KW-0456">Lyase</keyword>
<keyword id="KW-1185">Reference proteome</keyword>
<keyword id="KW-0704">Schiff base</keyword>
<reference key="1">
    <citation type="journal article" date="1989" name="Nucleic Acids Res.">
        <title>Nucleotide sequence of the deoC gene of Mycoplasma pneumoniae.</title>
        <authorList>
            <person name="Loechel S."/>
            <person name="Inamine J.M."/>
            <person name="Hu P.-C."/>
        </authorList>
    </citation>
    <scope>NUCLEOTIDE SEQUENCE [GENOMIC DNA]</scope>
    <source>
        <strain>ATCC 29342 / M129 / Subtype 1</strain>
    </source>
</reference>
<reference key="2">
    <citation type="journal article" date="1996" name="Nucleic Acids Res.">
        <title>Complete sequence analysis of the genome of the bacterium Mycoplasma pneumoniae.</title>
        <authorList>
            <person name="Himmelreich R."/>
            <person name="Hilbert H."/>
            <person name="Plagens H."/>
            <person name="Pirkl E."/>
            <person name="Li B.-C."/>
            <person name="Herrmann R."/>
        </authorList>
    </citation>
    <scope>NUCLEOTIDE SEQUENCE [LARGE SCALE GENOMIC DNA]</scope>
    <source>
        <strain>ATCC 29342 / M129 / Subtype 1</strain>
    </source>
</reference>
<feature type="chain" id="PRO_0000057245" description="Deoxyribose-phosphate aldolase">
    <location>
        <begin position="1"/>
        <end position="224"/>
    </location>
</feature>
<feature type="active site" description="Proton donor/acceptor" evidence="1">
    <location>
        <position position="91"/>
    </location>
</feature>
<feature type="active site" description="Schiff-base intermediate with acetaldehyde" evidence="1">
    <location>
        <position position="152"/>
    </location>
</feature>
<feature type="active site" description="Proton donor/acceptor" evidence="1">
    <location>
        <position position="181"/>
    </location>
</feature>
<evidence type="ECO:0000255" key="1">
    <source>
        <dbReference type="HAMAP-Rule" id="MF_00114"/>
    </source>
</evidence>
<evidence type="ECO:0000305" key="2"/>